<dbReference type="EMBL" id="CP001404">
    <property type="protein sequence ID" value="ACP48098.1"/>
    <property type="molecule type" value="Genomic_DNA"/>
</dbReference>
<dbReference type="RefSeq" id="WP_012711820.1">
    <property type="nucleotide sequence ID" value="NC_012623.1"/>
</dbReference>
<dbReference type="SMR" id="C3NFY0"/>
<dbReference type="KEGG" id="sin:YN1551_0990"/>
<dbReference type="HOGENOM" id="CLU_176720_0_0_2"/>
<dbReference type="Proteomes" id="UP000006818">
    <property type="component" value="Chromosome"/>
</dbReference>
<dbReference type="GO" id="GO:0005829">
    <property type="term" value="C:cytosol"/>
    <property type="evidence" value="ECO:0007669"/>
    <property type="project" value="UniProtKB-ARBA"/>
</dbReference>
<dbReference type="GO" id="GO:1990904">
    <property type="term" value="C:ribonucleoprotein complex"/>
    <property type="evidence" value="ECO:0007669"/>
    <property type="project" value="UniProtKB-KW"/>
</dbReference>
<dbReference type="GO" id="GO:0005840">
    <property type="term" value="C:ribosome"/>
    <property type="evidence" value="ECO:0007669"/>
    <property type="project" value="UniProtKB-KW"/>
</dbReference>
<dbReference type="GO" id="GO:0003735">
    <property type="term" value="F:structural constituent of ribosome"/>
    <property type="evidence" value="ECO:0007669"/>
    <property type="project" value="InterPro"/>
</dbReference>
<dbReference type="GO" id="GO:0006412">
    <property type="term" value="P:translation"/>
    <property type="evidence" value="ECO:0007669"/>
    <property type="project" value="UniProtKB-UniRule"/>
</dbReference>
<dbReference type="Gene3D" id="1.10.60.20">
    <property type="entry name" value="Ribosomal protein S17e-like"/>
    <property type="match status" value="1"/>
</dbReference>
<dbReference type="HAMAP" id="MF_00511">
    <property type="entry name" value="Ribosomal_eS17"/>
    <property type="match status" value="1"/>
</dbReference>
<dbReference type="InterPro" id="IPR001210">
    <property type="entry name" value="Ribosomal_eS17"/>
</dbReference>
<dbReference type="InterPro" id="IPR018273">
    <property type="entry name" value="Ribosomal_eS17_CS"/>
</dbReference>
<dbReference type="InterPro" id="IPR036401">
    <property type="entry name" value="Ribosomal_eS17_sf"/>
</dbReference>
<dbReference type="NCBIfam" id="NF002242">
    <property type="entry name" value="PRK01151.1"/>
    <property type="match status" value="1"/>
</dbReference>
<dbReference type="PANTHER" id="PTHR10732">
    <property type="entry name" value="40S RIBOSOMAL PROTEIN S17"/>
    <property type="match status" value="1"/>
</dbReference>
<dbReference type="PANTHER" id="PTHR10732:SF0">
    <property type="entry name" value="40S RIBOSOMAL PROTEIN S17"/>
    <property type="match status" value="1"/>
</dbReference>
<dbReference type="Pfam" id="PF00833">
    <property type="entry name" value="Ribosomal_S17e"/>
    <property type="match status" value="1"/>
</dbReference>
<dbReference type="SUPFAM" id="SSF116820">
    <property type="entry name" value="Rps17e-like"/>
    <property type="match status" value="1"/>
</dbReference>
<dbReference type="PROSITE" id="PS00712">
    <property type="entry name" value="RIBOSOMAL_S17E"/>
    <property type="match status" value="1"/>
</dbReference>
<evidence type="ECO:0000255" key="1">
    <source>
        <dbReference type="HAMAP-Rule" id="MF_00511"/>
    </source>
</evidence>
<evidence type="ECO:0000305" key="2"/>
<gene>
    <name evidence="1" type="primary">rps17e</name>
    <name type="ordered locus">YN1551_0990</name>
</gene>
<sequence length="79" mass="9615">MGNIYTKDIKRIVKEIYNQYKDEIKDDYNTNKQIVVRYVDVKSKKVRNRIAGYLTRYYKIMKEKETSPTEEKEEISEEI</sequence>
<protein>
    <recommendedName>
        <fullName evidence="1">Small ribosomal subunit protein eS17</fullName>
    </recommendedName>
    <alternativeName>
        <fullName evidence="2">30S ribosomal protein S17e</fullName>
    </alternativeName>
</protein>
<reference key="1">
    <citation type="journal article" date="2009" name="Proc. Natl. Acad. Sci. U.S.A.">
        <title>Biogeography of the Sulfolobus islandicus pan-genome.</title>
        <authorList>
            <person name="Reno M.L."/>
            <person name="Held N.L."/>
            <person name="Fields C.J."/>
            <person name="Burke P.V."/>
            <person name="Whitaker R.J."/>
        </authorList>
    </citation>
    <scope>NUCLEOTIDE SEQUENCE [LARGE SCALE GENOMIC DNA]</scope>
    <source>
        <strain>Y.N.15.51 / Yellowstone #2</strain>
    </source>
</reference>
<comment type="similarity">
    <text evidence="1">Belongs to the eukaryotic ribosomal protein eS17 family.</text>
</comment>
<keyword id="KW-0687">Ribonucleoprotein</keyword>
<keyword id="KW-0689">Ribosomal protein</keyword>
<organism>
    <name type="scientific">Saccharolobus islandicus (strain Y.N.15.51 / Yellowstone #2)</name>
    <name type="common">Sulfolobus islandicus</name>
    <dbReference type="NCBI Taxonomy" id="419942"/>
    <lineage>
        <taxon>Archaea</taxon>
        <taxon>Thermoproteota</taxon>
        <taxon>Thermoprotei</taxon>
        <taxon>Sulfolobales</taxon>
        <taxon>Sulfolobaceae</taxon>
        <taxon>Saccharolobus</taxon>
    </lineage>
</organism>
<feature type="chain" id="PRO_1000206618" description="Small ribosomal subunit protein eS17">
    <location>
        <begin position="1"/>
        <end position="79"/>
    </location>
</feature>
<accession>C3NFY0</accession>
<proteinExistence type="inferred from homology"/>
<name>RS17E_SACI1</name>